<evidence type="ECO:0000255" key="1"/>
<evidence type="ECO:0000269" key="2">
    <source>
    </source>
</evidence>
<evidence type="ECO:0000303" key="3">
    <source>
    </source>
</evidence>
<evidence type="ECO:0000305" key="4"/>
<evidence type="ECO:0000305" key="5">
    <source>
    </source>
</evidence>
<evidence type="ECO:0007744" key="6">
    <source>
        <dbReference type="PDB" id="7B1R"/>
    </source>
</evidence>
<evidence type="ECO:0007744" key="7">
    <source>
        <dbReference type="PDB" id="7O2N"/>
    </source>
</evidence>
<evidence type="ECO:0007829" key="8">
    <source>
        <dbReference type="PDB" id="7B1R"/>
    </source>
</evidence>
<protein>
    <recommendedName>
        <fullName evidence="3">UTP--glucose-1-phosphate uridylyltransferase YngB</fullName>
        <ecNumber evidence="2">2.7.7.9</ecNumber>
    </recommendedName>
    <alternativeName>
        <fullName>Alpha-D-glucosyl-1-phosphate uridylyltransferase</fullName>
    </alternativeName>
    <alternativeName>
        <fullName>UDP-glucose pyrophosphorylase</fullName>
        <shortName>UDPGP</shortName>
        <shortName evidence="3">UGPase</shortName>
    </alternativeName>
    <alternativeName>
        <fullName>Uridine diphosphoglucose pyrophosphorylase</fullName>
    </alternativeName>
</protein>
<reference key="1">
    <citation type="journal article" date="1997" name="Nature">
        <title>The complete genome sequence of the Gram-positive bacterium Bacillus subtilis.</title>
        <authorList>
            <person name="Kunst F."/>
            <person name="Ogasawara N."/>
            <person name="Moszer I."/>
            <person name="Albertini A.M."/>
            <person name="Alloni G."/>
            <person name="Azevedo V."/>
            <person name="Bertero M.G."/>
            <person name="Bessieres P."/>
            <person name="Bolotin A."/>
            <person name="Borchert S."/>
            <person name="Borriss R."/>
            <person name="Boursier L."/>
            <person name="Brans A."/>
            <person name="Braun M."/>
            <person name="Brignell S.C."/>
            <person name="Bron S."/>
            <person name="Brouillet S."/>
            <person name="Bruschi C.V."/>
            <person name="Caldwell B."/>
            <person name="Capuano V."/>
            <person name="Carter N.M."/>
            <person name="Choi S.-K."/>
            <person name="Codani J.-J."/>
            <person name="Connerton I.F."/>
            <person name="Cummings N.J."/>
            <person name="Daniel R.A."/>
            <person name="Denizot F."/>
            <person name="Devine K.M."/>
            <person name="Duesterhoeft A."/>
            <person name="Ehrlich S.D."/>
            <person name="Emmerson P.T."/>
            <person name="Entian K.-D."/>
            <person name="Errington J."/>
            <person name="Fabret C."/>
            <person name="Ferrari E."/>
            <person name="Foulger D."/>
            <person name="Fritz C."/>
            <person name="Fujita M."/>
            <person name="Fujita Y."/>
            <person name="Fuma S."/>
            <person name="Galizzi A."/>
            <person name="Galleron N."/>
            <person name="Ghim S.-Y."/>
            <person name="Glaser P."/>
            <person name="Goffeau A."/>
            <person name="Golightly E.J."/>
            <person name="Grandi G."/>
            <person name="Guiseppi G."/>
            <person name="Guy B.J."/>
            <person name="Haga K."/>
            <person name="Haiech J."/>
            <person name="Harwood C.R."/>
            <person name="Henaut A."/>
            <person name="Hilbert H."/>
            <person name="Holsappel S."/>
            <person name="Hosono S."/>
            <person name="Hullo M.-F."/>
            <person name="Itaya M."/>
            <person name="Jones L.-M."/>
            <person name="Joris B."/>
            <person name="Karamata D."/>
            <person name="Kasahara Y."/>
            <person name="Klaerr-Blanchard M."/>
            <person name="Klein C."/>
            <person name="Kobayashi Y."/>
            <person name="Koetter P."/>
            <person name="Koningstein G."/>
            <person name="Krogh S."/>
            <person name="Kumano M."/>
            <person name="Kurita K."/>
            <person name="Lapidus A."/>
            <person name="Lardinois S."/>
            <person name="Lauber J."/>
            <person name="Lazarevic V."/>
            <person name="Lee S.-M."/>
            <person name="Levine A."/>
            <person name="Liu H."/>
            <person name="Masuda S."/>
            <person name="Mauel C."/>
            <person name="Medigue C."/>
            <person name="Medina N."/>
            <person name="Mellado R.P."/>
            <person name="Mizuno M."/>
            <person name="Moestl D."/>
            <person name="Nakai S."/>
            <person name="Noback M."/>
            <person name="Noone D."/>
            <person name="O'Reilly M."/>
            <person name="Ogawa K."/>
            <person name="Ogiwara A."/>
            <person name="Oudega B."/>
            <person name="Park S.-H."/>
            <person name="Parro V."/>
            <person name="Pohl T.M."/>
            <person name="Portetelle D."/>
            <person name="Porwollik S."/>
            <person name="Prescott A.M."/>
            <person name="Presecan E."/>
            <person name="Pujic P."/>
            <person name="Purnelle B."/>
            <person name="Rapoport G."/>
            <person name="Rey M."/>
            <person name="Reynolds S."/>
            <person name="Rieger M."/>
            <person name="Rivolta C."/>
            <person name="Rocha E."/>
            <person name="Roche B."/>
            <person name="Rose M."/>
            <person name="Sadaie Y."/>
            <person name="Sato T."/>
            <person name="Scanlan E."/>
            <person name="Schleich S."/>
            <person name="Schroeter R."/>
            <person name="Scoffone F."/>
            <person name="Sekiguchi J."/>
            <person name="Sekowska A."/>
            <person name="Seror S.J."/>
            <person name="Serror P."/>
            <person name="Shin B.-S."/>
            <person name="Soldo B."/>
            <person name="Sorokin A."/>
            <person name="Tacconi E."/>
            <person name="Takagi T."/>
            <person name="Takahashi H."/>
            <person name="Takemaru K."/>
            <person name="Takeuchi M."/>
            <person name="Tamakoshi A."/>
            <person name="Tanaka T."/>
            <person name="Terpstra P."/>
            <person name="Tognoni A."/>
            <person name="Tosato V."/>
            <person name="Uchiyama S."/>
            <person name="Vandenbol M."/>
            <person name="Vannier F."/>
            <person name="Vassarotti A."/>
            <person name="Viari A."/>
            <person name="Wambutt R."/>
            <person name="Wedler E."/>
            <person name="Wedler H."/>
            <person name="Weitzenegger T."/>
            <person name="Winters P."/>
            <person name="Wipat A."/>
            <person name="Yamamoto H."/>
            <person name="Yamane K."/>
            <person name="Yasumoto K."/>
            <person name="Yata K."/>
            <person name="Yoshida K."/>
            <person name="Yoshikawa H.-F."/>
            <person name="Zumstein E."/>
            <person name="Yoshikawa H."/>
            <person name="Danchin A."/>
        </authorList>
    </citation>
    <scope>NUCLEOTIDE SEQUENCE [LARGE SCALE GENOMIC DNA]</scope>
    <source>
        <strain>168</strain>
    </source>
</reference>
<reference evidence="6" key="2">
    <citation type="journal article" date="2021" name="J. Biol. Chem.">
        <title>Bacillus subtilis YngB contributes to wall teichoic acid glucosylation and glycolipid formation during anaerobic growth.</title>
        <authorList>
            <person name="Wu C.H."/>
            <person name="Rismondo J."/>
            <person name="Morgan R.M.L."/>
            <person name="Shen Y."/>
            <person name="Loessner M.J."/>
            <person name="Larrouy-Maumus G."/>
            <person name="Freemont P.S."/>
            <person name="Gruendling A."/>
        </authorList>
    </citation>
    <scope>X-RAY CRYSTALLOGRAPHY (2.80 ANGSTROMS) OF 2-297</scope>
    <scope>FUNCTION</scope>
    <scope>CATALYTIC ACTIVITY</scope>
    <scope>BIOPHYSICOCHEMICAL PROPERTIES</scope>
    <scope>SUBUNIT</scope>
    <scope>INDUCTION</scope>
    <source>
        <strain>168</strain>
    </source>
</reference>
<reference evidence="7" key="3">
    <citation type="submission" date="2021-03" db="PDB data bank">
        <title>Structural and functional characterisation of the Bacillus subtilis uridylyltransferase YngB.</title>
        <authorList>
            <person name="Wu C."/>
        </authorList>
    </citation>
    <scope>X-RAY CRYSTALLOGRAPHY (2.80 ANGSTROMS) OF 2-297</scope>
</reference>
<sequence length="297" mass="33147">MRKKVRKAVIPAAGLGTRFLPATKAQPKEMLPIVDKPAIQYIVEEAAESGIEDILIITGRNKRSIEDHFDRSAELEFNLREKGKTETLKEMQQIADLANIHYIRQKEPLGLGHAVLCAEHFIGDEPFAVLLGDDIMVSETPALRQLMDVYDVYGTEVVGVQSVLPEDVSKYGIINTSGSQGHVYEVNDLVEKPSPEEAPSEIAVMGRYVLNSSIFSVLKTIGRGAGNEIQLTDALREVCRKEPIHARLLEGNRYDIGDKLGCFKASTEIGLMRPEMRSQLLAYLEDVIKRETKEMLR</sequence>
<comment type="function">
    <text evidence="2">Catalyzes the formation of UDP-glucose from glucose-1-phosphate and UTP (PubMed:33556370). This is an intermediate step in the biosynthesis of diglucosyl-diacylglycerol (Glc2-DAG), i.e. the predominant glycolipid found in B.subtilis membrane, which is also used as a membrane anchor for lipoteichoic acid (LTA) (PubMed:33556370). YngB contributes to wall teichoic acid (WTA) glucosylation and glycolipid formation under anaerobic fermentative growth conditions (PubMed:33556370). Might also enter other glycosylation pathways, leading to the decorating of other cell envelope components with glucose residues under anaerobic or other growth conditions (PubMed:33556370).</text>
</comment>
<comment type="catalytic activity">
    <reaction evidence="2">
        <text>alpha-D-glucose 1-phosphate + UTP + H(+) = UDP-alpha-D-glucose + diphosphate</text>
        <dbReference type="Rhea" id="RHEA:19889"/>
        <dbReference type="ChEBI" id="CHEBI:15378"/>
        <dbReference type="ChEBI" id="CHEBI:33019"/>
        <dbReference type="ChEBI" id="CHEBI:46398"/>
        <dbReference type="ChEBI" id="CHEBI:58601"/>
        <dbReference type="ChEBI" id="CHEBI:58885"/>
        <dbReference type="EC" id="2.7.7.9"/>
    </reaction>
</comment>
<comment type="biophysicochemical properties">
    <kinetics>
        <KM evidence="2">42.1 uM for glucose-1-phosphate</KM>
        <KM evidence="2">62.9 uM for UTP</KM>
        <text evidence="2">kcat is 0.264 sec(-1) with glucose-1-phosphate as substrate. kcat is 0.293 sec(-1) with UTP as substrate.</text>
    </kinetics>
</comment>
<comment type="pathway">
    <text evidence="5">Glycolipid metabolism; diglucosyl-diacylglycerol biosynthesis.</text>
</comment>
<comment type="subunit">
    <text evidence="2">Homodimer.</text>
</comment>
<comment type="induction">
    <text evidence="2">Expressed under anaerobic conditions.</text>
</comment>
<comment type="miscellaneous">
    <text evidence="2">GtaB is the main UGPase enzyme producing UDP-glucose under both aerobic and anaerobic fermentative growth conditions (PubMed:33556370). YngB augments UDP-glucose production under anaerobic growth conditions (PubMed:33556370).</text>
</comment>
<comment type="similarity">
    <text evidence="4">Belongs to the UDPGP type 2 family.</text>
</comment>
<gene>
    <name type="primary">yngB</name>
    <name type="ordered locus">BSU18180</name>
</gene>
<proteinExistence type="evidence at protein level"/>
<dbReference type="EC" id="2.7.7.9" evidence="2"/>
<dbReference type="EMBL" id="AL009126">
    <property type="protein sequence ID" value="CAB13701.1"/>
    <property type="molecule type" value="Genomic_DNA"/>
</dbReference>
<dbReference type="PIR" id="G69892">
    <property type="entry name" value="G69892"/>
</dbReference>
<dbReference type="RefSeq" id="NP_389700.1">
    <property type="nucleotide sequence ID" value="NC_000964.3"/>
</dbReference>
<dbReference type="PDB" id="7B1R">
    <property type="method" value="X-ray"/>
    <property type="resolution" value="2.80 A"/>
    <property type="chains" value="A/B=2-297"/>
</dbReference>
<dbReference type="PDB" id="7O2N">
    <property type="method" value="X-ray"/>
    <property type="resolution" value="2.80 A"/>
    <property type="chains" value="A/B=2-297"/>
</dbReference>
<dbReference type="PDBsum" id="7B1R"/>
<dbReference type="PDBsum" id="7O2N"/>
<dbReference type="SMR" id="O31822"/>
<dbReference type="FunCoup" id="O31822">
    <property type="interactions" value="330"/>
</dbReference>
<dbReference type="STRING" id="224308.BSU18180"/>
<dbReference type="PaxDb" id="224308-BSU18180"/>
<dbReference type="EnsemblBacteria" id="CAB13701">
    <property type="protein sequence ID" value="CAB13701"/>
    <property type="gene ID" value="BSU_18180"/>
</dbReference>
<dbReference type="GeneID" id="936791"/>
<dbReference type="KEGG" id="bsu:BSU18180"/>
<dbReference type="PATRIC" id="fig|224308.179.peg.1983"/>
<dbReference type="eggNOG" id="COG1210">
    <property type="taxonomic scope" value="Bacteria"/>
</dbReference>
<dbReference type="InParanoid" id="O31822"/>
<dbReference type="OrthoDB" id="9803871at2"/>
<dbReference type="PhylomeDB" id="O31822"/>
<dbReference type="BioCyc" id="BSUB:BSU18180-MONOMER"/>
<dbReference type="UniPathway" id="UPA00894"/>
<dbReference type="Proteomes" id="UP000001570">
    <property type="component" value="Chromosome"/>
</dbReference>
<dbReference type="GO" id="GO:0003983">
    <property type="term" value="F:UTP:glucose-1-phosphate uridylyltransferase activity"/>
    <property type="evidence" value="ECO:0007669"/>
    <property type="project" value="UniProtKB-EC"/>
</dbReference>
<dbReference type="GO" id="GO:0009246">
    <property type="term" value="P:enterobacterial common antigen biosynthetic process"/>
    <property type="evidence" value="ECO:0007669"/>
    <property type="project" value="UniProtKB-UniPathway"/>
</dbReference>
<dbReference type="GO" id="GO:0006011">
    <property type="term" value="P:UDP-alpha-D-glucose metabolic process"/>
    <property type="evidence" value="ECO:0007669"/>
    <property type="project" value="InterPro"/>
</dbReference>
<dbReference type="CDD" id="cd02541">
    <property type="entry name" value="UGPase_prokaryotic"/>
    <property type="match status" value="1"/>
</dbReference>
<dbReference type="Gene3D" id="3.90.550.10">
    <property type="entry name" value="Spore Coat Polysaccharide Biosynthesis Protein SpsA, Chain A"/>
    <property type="match status" value="1"/>
</dbReference>
<dbReference type="InterPro" id="IPR005771">
    <property type="entry name" value="GalU_uridylyltTrfase_bac/arc"/>
</dbReference>
<dbReference type="InterPro" id="IPR005835">
    <property type="entry name" value="NTP_transferase_dom"/>
</dbReference>
<dbReference type="InterPro" id="IPR029044">
    <property type="entry name" value="Nucleotide-diphossugar_trans"/>
</dbReference>
<dbReference type="NCBIfam" id="TIGR01099">
    <property type="entry name" value="galU"/>
    <property type="match status" value="1"/>
</dbReference>
<dbReference type="PANTHER" id="PTHR43197">
    <property type="entry name" value="UTP--GLUCOSE-1-PHOSPHATE URIDYLYLTRANSFERASE"/>
    <property type="match status" value="1"/>
</dbReference>
<dbReference type="PANTHER" id="PTHR43197:SF1">
    <property type="entry name" value="UTP--GLUCOSE-1-PHOSPHATE URIDYLYLTRANSFERASE"/>
    <property type="match status" value="1"/>
</dbReference>
<dbReference type="Pfam" id="PF00483">
    <property type="entry name" value="NTP_transferase"/>
    <property type="match status" value="1"/>
</dbReference>
<dbReference type="SUPFAM" id="SSF53448">
    <property type="entry name" value="Nucleotide-diphospho-sugar transferases"/>
    <property type="match status" value="1"/>
</dbReference>
<keyword id="KW-0002">3D-structure</keyword>
<keyword id="KW-0119">Carbohydrate metabolism</keyword>
<keyword id="KW-0548">Nucleotidyltransferase</keyword>
<keyword id="KW-1185">Reference proteome</keyword>
<keyword id="KW-0732">Signal</keyword>
<keyword id="KW-0808">Transferase</keyword>
<name>YNGB_BACSU</name>
<accession>O31822</accession>
<feature type="signal peptide" evidence="1">
    <location>
        <begin position="1"/>
        <end position="27"/>
    </location>
</feature>
<feature type="chain" id="PRO_0000389480" description="UTP--glucose-1-phosphate uridylyltransferase YngB">
    <location>
        <begin position="28"/>
        <end position="297"/>
    </location>
</feature>
<feature type="strand" evidence="8">
    <location>
        <begin position="7"/>
        <end position="12"/>
    </location>
</feature>
<feature type="helix" evidence="8">
    <location>
        <begin position="17"/>
        <end position="19"/>
    </location>
</feature>
<feature type="helix" evidence="8">
    <location>
        <begin position="22"/>
        <end position="24"/>
    </location>
</feature>
<feature type="helix" evidence="8">
    <location>
        <begin position="28"/>
        <end position="30"/>
    </location>
</feature>
<feature type="strand" evidence="8">
    <location>
        <begin position="31"/>
        <end position="37"/>
    </location>
</feature>
<feature type="helix" evidence="8">
    <location>
        <begin position="38"/>
        <end position="48"/>
    </location>
</feature>
<feature type="strand" evidence="8">
    <location>
        <begin position="53"/>
        <end position="58"/>
    </location>
</feature>
<feature type="helix" evidence="8">
    <location>
        <begin position="63"/>
        <end position="68"/>
    </location>
</feature>
<feature type="helix" evidence="8">
    <location>
        <begin position="73"/>
        <end position="80"/>
    </location>
</feature>
<feature type="turn" evidence="8">
    <location>
        <begin position="81"/>
        <end position="83"/>
    </location>
</feature>
<feature type="helix" evidence="8">
    <location>
        <begin position="85"/>
        <end position="94"/>
    </location>
</feature>
<feature type="strand" evidence="8">
    <location>
        <begin position="97"/>
        <end position="104"/>
    </location>
</feature>
<feature type="helix" evidence="8">
    <location>
        <begin position="113"/>
        <end position="117"/>
    </location>
</feature>
<feature type="helix" evidence="8">
    <location>
        <begin position="119"/>
        <end position="122"/>
    </location>
</feature>
<feature type="strand" evidence="8">
    <location>
        <begin position="124"/>
        <end position="130"/>
    </location>
</feature>
<feature type="strand" evidence="8">
    <location>
        <begin position="133"/>
        <end position="137"/>
    </location>
</feature>
<feature type="helix" evidence="8">
    <location>
        <begin position="142"/>
        <end position="153"/>
    </location>
</feature>
<feature type="strand" evidence="8">
    <location>
        <begin position="157"/>
        <end position="162"/>
    </location>
</feature>
<feature type="helix" evidence="8">
    <location>
        <begin position="165"/>
        <end position="168"/>
    </location>
</feature>
<feature type="strand" evidence="8">
    <location>
        <begin position="169"/>
        <end position="171"/>
    </location>
</feature>
<feature type="strand" evidence="8">
    <location>
        <begin position="173"/>
        <end position="180"/>
    </location>
</feature>
<feature type="strand" evidence="8">
    <location>
        <begin position="183"/>
        <end position="189"/>
    </location>
</feature>
<feature type="turn" evidence="8">
    <location>
        <begin position="195"/>
        <end position="197"/>
    </location>
</feature>
<feature type="strand" evidence="8">
    <location>
        <begin position="201"/>
        <end position="211"/>
    </location>
</feature>
<feature type="helix" evidence="8">
    <location>
        <begin position="214"/>
        <end position="221"/>
    </location>
</feature>
<feature type="helix" evidence="8">
    <location>
        <begin position="233"/>
        <end position="241"/>
    </location>
</feature>
<feature type="strand" evidence="8">
    <location>
        <begin position="245"/>
        <end position="248"/>
    </location>
</feature>
<feature type="strand" evidence="8">
    <location>
        <begin position="251"/>
        <end position="255"/>
    </location>
</feature>
<feature type="helix" evidence="8">
    <location>
        <begin position="259"/>
        <end position="271"/>
    </location>
</feature>
<feature type="helix" evidence="8">
    <location>
        <begin position="274"/>
        <end position="296"/>
    </location>
</feature>
<organism>
    <name type="scientific">Bacillus subtilis (strain 168)</name>
    <dbReference type="NCBI Taxonomy" id="224308"/>
    <lineage>
        <taxon>Bacteria</taxon>
        <taxon>Bacillati</taxon>
        <taxon>Bacillota</taxon>
        <taxon>Bacilli</taxon>
        <taxon>Bacillales</taxon>
        <taxon>Bacillaceae</taxon>
        <taxon>Bacillus</taxon>
    </lineage>
</organism>